<accession>Q9JMQ1</accession>
<accession>Q796M9</accession>
<feature type="chain" id="PRO_0000359946" description="Probable HTH-type transcriptional repressor ExuR">
    <location>
        <begin position="1"/>
        <end position="333"/>
    </location>
</feature>
<feature type="domain" description="HTH lacI-type" evidence="1">
    <location>
        <begin position="2"/>
        <end position="56"/>
    </location>
</feature>
<feature type="DNA-binding region" description="H-T-H motif" evidence="1">
    <location>
        <begin position="4"/>
        <end position="23"/>
    </location>
</feature>
<proteinExistence type="evidence at transcript level"/>
<gene>
    <name type="primary">exuR</name>
    <name type="synonym">yjmH</name>
    <name type="ordered locus">BSU12370</name>
</gene>
<comment type="function">
    <text evidence="3">Transcriptional repressor for the exu locus which is required for galacturonate utilization.</text>
</comment>
<comment type="induction">
    <text evidence="4">Induced by galacturonate, repressed by glucose.</text>
</comment>
<comment type="disruption phenotype">
    <text evidence="2">Cells lacking this gene express the exu locus genes (required for hexuronate utilization) constitutively. Its absence additionally confers the ability to grow on minimal medium plus glucuronate, which cells cannot do in the presence of ExuR.</text>
</comment>
<sequence>MVTIKDIAKLANVSHTTVSRALNNSPYIKEHTKKKILELAEQLNYTPNVNAKSLAMQKSHTIGLFFTSITNGTSHSFFADTIKGVNQAISEDYNLYVRGIDDLKNYDSVTPMRYDGIILMSQSDIDNSFIYHIREKNIPLVVLNRDIDDRTITNILSNDKEGSQEAVEYFIQSGHQDIAIIEGIEGFKSSQQRKEGYLSALIQHHIPIKHEYSVKGQYDMESGFQAMERLLALPNPPTAVFCSNDDMAIGAMNAIFAKGLRVPDDISVIGFDDIGFSQYITPRLSTVKRPVEKISVLGAQKLLSLISEPETKAEKILENTEFMVRDSVRRLTT</sequence>
<protein>
    <recommendedName>
        <fullName>Probable HTH-type transcriptional repressor ExuR</fullName>
    </recommendedName>
    <alternativeName>
        <fullName>Probable galacturonate locus repressor</fullName>
    </alternativeName>
</protein>
<dbReference type="EMBL" id="AF015825">
    <property type="protein sequence ID" value="AAC46333.1"/>
    <property type="molecule type" value="Genomic_DNA"/>
</dbReference>
<dbReference type="EMBL" id="AL009126">
    <property type="protein sequence ID" value="CAB13094.1"/>
    <property type="molecule type" value="Genomic_DNA"/>
</dbReference>
<dbReference type="PIR" id="B69853">
    <property type="entry name" value="B69853"/>
</dbReference>
<dbReference type="RefSeq" id="NP_389119.1">
    <property type="nucleotide sequence ID" value="NC_000964.3"/>
</dbReference>
<dbReference type="RefSeq" id="WP_003244946.1">
    <property type="nucleotide sequence ID" value="NZ_OZ025638.1"/>
</dbReference>
<dbReference type="SMR" id="Q9JMQ1"/>
<dbReference type="FunCoup" id="Q9JMQ1">
    <property type="interactions" value="29"/>
</dbReference>
<dbReference type="STRING" id="224308.BSU12370"/>
<dbReference type="PaxDb" id="224308-BSU12370"/>
<dbReference type="EnsemblBacteria" id="CAB13094">
    <property type="protein sequence ID" value="CAB13094"/>
    <property type="gene ID" value="BSU_12370"/>
</dbReference>
<dbReference type="GeneID" id="939834"/>
<dbReference type="KEGG" id="bsu:BSU12370"/>
<dbReference type="PATRIC" id="fig|224308.179.peg.1338"/>
<dbReference type="eggNOG" id="COG1609">
    <property type="taxonomic scope" value="Bacteria"/>
</dbReference>
<dbReference type="InParanoid" id="Q9JMQ1"/>
<dbReference type="OrthoDB" id="9775106at2"/>
<dbReference type="PhylomeDB" id="Q9JMQ1"/>
<dbReference type="BioCyc" id="BSUB:BSU12370-MONOMER"/>
<dbReference type="Proteomes" id="UP000001570">
    <property type="component" value="Chromosome"/>
</dbReference>
<dbReference type="GO" id="GO:0003700">
    <property type="term" value="F:DNA-binding transcription factor activity"/>
    <property type="evidence" value="ECO:0000318"/>
    <property type="project" value="GO_Central"/>
</dbReference>
<dbReference type="GO" id="GO:0000976">
    <property type="term" value="F:transcription cis-regulatory region binding"/>
    <property type="evidence" value="ECO:0000318"/>
    <property type="project" value="GO_Central"/>
</dbReference>
<dbReference type="GO" id="GO:0006355">
    <property type="term" value="P:regulation of DNA-templated transcription"/>
    <property type="evidence" value="ECO:0000318"/>
    <property type="project" value="GO_Central"/>
</dbReference>
<dbReference type="CDD" id="cd01392">
    <property type="entry name" value="HTH_LacI"/>
    <property type="match status" value="1"/>
</dbReference>
<dbReference type="CDD" id="cd06267">
    <property type="entry name" value="PBP1_LacI_sugar_binding-like"/>
    <property type="match status" value="1"/>
</dbReference>
<dbReference type="Gene3D" id="3.40.50.2300">
    <property type="match status" value="2"/>
</dbReference>
<dbReference type="Gene3D" id="1.10.260.40">
    <property type="entry name" value="lambda repressor-like DNA-binding domains"/>
    <property type="match status" value="1"/>
</dbReference>
<dbReference type="InterPro" id="IPR000843">
    <property type="entry name" value="HTH_LacI"/>
</dbReference>
<dbReference type="InterPro" id="IPR046335">
    <property type="entry name" value="LacI/GalR-like_sensor"/>
</dbReference>
<dbReference type="InterPro" id="IPR010982">
    <property type="entry name" value="Lambda_DNA-bd_dom_sf"/>
</dbReference>
<dbReference type="InterPro" id="IPR028082">
    <property type="entry name" value="Peripla_BP_I"/>
</dbReference>
<dbReference type="PANTHER" id="PTHR30146:SF148">
    <property type="entry name" value="HTH-TYPE TRANSCRIPTIONAL REPRESSOR PURR-RELATED"/>
    <property type="match status" value="1"/>
</dbReference>
<dbReference type="PANTHER" id="PTHR30146">
    <property type="entry name" value="LACI-RELATED TRANSCRIPTIONAL REPRESSOR"/>
    <property type="match status" value="1"/>
</dbReference>
<dbReference type="Pfam" id="PF00356">
    <property type="entry name" value="LacI"/>
    <property type="match status" value="1"/>
</dbReference>
<dbReference type="Pfam" id="PF13377">
    <property type="entry name" value="Peripla_BP_3"/>
    <property type="match status" value="1"/>
</dbReference>
<dbReference type="PRINTS" id="PR00036">
    <property type="entry name" value="HTHLACI"/>
</dbReference>
<dbReference type="SMART" id="SM00354">
    <property type="entry name" value="HTH_LACI"/>
    <property type="match status" value="1"/>
</dbReference>
<dbReference type="SUPFAM" id="SSF47413">
    <property type="entry name" value="lambda repressor-like DNA-binding domains"/>
    <property type="match status" value="1"/>
</dbReference>
<dbReference type="SUPFAM" id="SSF53822">
    <property type="entry name" value="Periplasmic binding protein-like I"/>
    <property type="match status" value="1"/>
</dbReference>
<dbReference type="PROSITE" id="PS00356">
    <property type="entry name" value="HTH_LACI_1"/>
    <property type="match status" value="1"/>
</dbReference>
<dbReference type="PROSITE" id="PS50932">
    <property type="entry name" value="HTH_LACI_2"/>
    <property type="match status" value="1"/>
</dbReference>
<keyword id="KW-0238">DNA-binding</keyword>
<keyword id="KW-1185">Reference proteome</keyword>
<keyword id="KW-0678">Repressor</keyword>
<keyword id="KW-0804">Transcription</keyword>
<keyword id="KW-0805">Transcription regulation</keyword>
<name>EXUR_BACSU</name>
<reference key="1">
    <citation type="journal article" date="1998" name="Microbiology">
        <title>A 35.7 kb DNA fragment from the Bacillus subtilis chromosome containing a putative 12.3 kb operon involved in hexuronate catabolism and a perfectly symmetrical hypothetical catabolite-responsive element.</title>
        <authorList>
            <person name="Rivolta C."/>
            <person name="Soldo B."/>
            <person name="Lazarevic V."/>
            <person name="Joris B."/>
            <person name="Mauel C."/>
            <person name="Karamata D."/>
        </authorList>
    </citation>
    <scope>NUCLEOTIDE SEQUENCE [GENOMIC DNA]</scope>
    <scope>PROBABLE OPERON STRUCTURE</scope>
    <source>
        <strain>168</strain>
    </source>
</reference>
<reference key="2">
    <citation type="journal article" date="1997" name="Nature">
        <title>The complete genome sequence of the Gram-positive bacterium Bacillus subtilis.</title>
        <authorList>
            <person name="Kunst F."/>
            <person name="Ogasawara N."/>
            <person name="Moszer I."/>
            <person name="Albertini A.M."/>
            <person name="Alloni G."/>
            <person name="Azevedo V."/>
            <person name="Bertero M.G."/>
            <person name="Bessieres P."/>
            <person name="Bolotin A."/>
            <person name="Borchert S."/>
            <person name="Borriss R."/>
            <person name="Boursier L."/>
            <person name="Brans A."/>
            <person name="Braun M."/>
            <person name="Brignell S.C."/>
            <person name="Bron S."/>
            <person name="Brouillet S."/>
            <person name="Bruschi C.V."/>
            <person name="Caldwell B."/>
            <person name="Capuano V."/>
            <person name="Carter N.M."/>
            <person name="Choi S.-K."/>
            <person name="Codani J.-J."/>
            <person name="Connerton I.F."/>
            <person name="Cummings N.J."/>
            <person name="Daniel R.A."/>
            <person name="Denizot F."/>
            <person name="Devine K.M."/>
            <person name="Duesterhoeft A."/>
            <person name="Ehrlich S.D."/>
            <person name="Emmerson P.T."/>
            <person name="Entian K.-D."/>
            <person name="Errington J."/>
            <person name="Fabret C."/>
            <person name="Ferrari E."/>
            <person name="Foulger D."/>
            <person name="Fritz C."/>
            <person name="Fujita M."/>
            <person name="Fujita Y."/>
            <person name="Fuma S."/>
            <person name="Galizzi A."/>
            <person name="Galleron N."/>
            <person name="Ghim S.-Y."/>
            <person name="Glaser P."/>
            <person name="Goffeau A."/>
            <person name="Golightly E.J."/>
            <person name="Grandi G."/>
            <person name="Guiseppi G."/>
            <person name="Guy B.J."/>
            <person name="Haga K."/>
            <person name="Haiech J."/>
            <person name="Harwood C.R."/>
            <person name="Henaut A."/>
            <person name="Hilbert H."/>
            <person name="Holsappel S."/>
            <person name="Hosono S."/>
            <person name="Hullo M.-F."/>
            <person name="Itaya M."/>
            <person name="Jones L.-M."/>
            <person name="Joris B."/>
            <person name="Karamata D."/>
            <person name="Kasahara Y."/>
            <person name="Klaerr-Blanchard M."/>
            <person name="Klein C."/>
            <person name="Kobayashi Y."/>
            <person name="Koetter P."/>
            <person name="Koningstein G."/>
            <person name="Krogh S."/>
            <person name="Kumano M."/>
            <person name="Kurita K."/>
            <person name="Lapidus A."/>
            <person name="Lardinois S."/>
            <person name="Lauber J."/>
            <person name="Lazarevic V."/>
            <person name="Lee S.-M."/>
            <person name="Levine A."/>
            <person name="Liu H."/>
            <person name="Masuda S."/>
            <person name="Mauel C."/>
            <person name="Medigue C."/>
            <person name="Medina N."/>
            <person name="Mellado R.P."/>
            <person name="Mizuno M."/>
            <person name="Moestl D."/>
            <person name="Nakai S."/>
            <person name="Noback M."/>
            <person name="Noone D."/>
            <person name="O'Reilly M."/>
            <person name="Ogawa K."/>
            <person name="Ogiwara A."/>
            <person name="Oudega B."/>
            <person name="Park S.-H."/>
            <person name="Parro V."/>
            <person name="Pohl T.M."/>
            <person name="Portetelle D."/>
            <person name="Porwollik S."/>
            <person name="Prescott A.M."/>
            <person name="Presecan E."/>
            <person name="Pujic P."/>
            <person name="Purnelle B."/>
            <person name="Rapoport G."/>
            <person name="Rey M."/>
            <person name="Reynolds S."/>
            <person name="Rieger M."/>
            <person name="Rivolta C."/>
            <person name="Rocha E."/>
            <person name="Roche B."/>
            <person name="Rose M."/>
            <person name="Sadaie Y."/>
            <person name="Sato T."/>
            <person name="Scanlan E."/>
            <person name="Schleich S."/>
            <person name="Schroeter R."/>
            <person name="Scoffone F."/>
            <person name="Sekiguchi J."/>
            <person name="Sekowska A."/>
            <person name="Seror S.J."/>
            <person name="Serror P."/>
            <person name="Shin B.-S."/>
            <person name="Soldo B."/>
            <person name="Sorokin A."/>
            <person name="Tacconi E."/>
            <person name="Takagi T."/>
            <person name="Takahashi H."/>
            <person name="Takemaru K."/>
            <person name="Takeuchi M."/>
            <person name="Tamakoshi A."/>
            <person name="Tanaka T."/>
            <person name="Terpstra P."/>
            <person name="Tognoni A."/>
            <person name="Tosato V."/>
            <person name="Uchiyama S."/>
            <person name="Vandenbol M."/>
            <person name="Vannier F."/>
            <person name="Vassarotti A."/>
            <person name="Viari A."/>
            <person name="Wambutt R."/>
            <person name="Wedler E."/>
            <person name="Wedler H."/>
            <person name="Weitzenegger T."/>
            <person name="Winters P."/>
            <person name="Wipat A."/>
            <person name="Yamamoto H."/>
            <person name="Yamane K."/>
            <person name="Yasumoto K."/>
            <person name="Yata K."/>
            <person name="Yoshida K."/>
            <person name="Yoshikawa H.-F."/>
            <person name="Zumstein E."/>
            <person name="Yoshikawa H."/>
            <person name="Danchin A."/>
        </authorList>
    </citation>
    <scope>NUCLEOTIDE SEQUENCE [LARGE SCALE GENOMIC DNA]</scope>
    <source>
        <strain>168</strain>
    </source>
</reference>
<reference key="3">
    <citation type="journal article" date="1999" name="J. Bacteriol.">
        <title>Regulation of hexuronate utilization in Bacillus subtilis.</title>
        <authorList>
            <person name="Mekjian K.R."/>
            <person name="Bryan E.M."/>
            <person name="Beall B.W."/>
            <person name="Moran C.P. Jr."/>
        </authorList>
    </citation>
    <scope>DISRUPTION PHENOTYPE</scope>
    <scope>PROBABLE OPERON STRUCTURE</scope>
    <scope>INDUCTION</scope>
    <source>
        <strain>168 / MB24</strain>
    </source>
</reference>
<organism>
    <name type="scientific">Bacillus subtilis (strain 168)</name>
    <dbReference type="NCBI Taxonomy" id="224308"/>
    <lineage>
        <taxon>Bacteria</taxon>
        <taxon>Bacillati</taxon>
        <taxon>Bacillota</taxon>
        <taxon>Bacilli</taxon>
        <taxon>Bacillales</taxon>
        <taxon>Bacillaceae</taxon>
        <taxon>Bacillus</taxon>
    </lineage>
</organism>
<evidence type="ECO:0000255" key="1">
    <source>
        <dbReference type="PROSITE-ProRule" id="PRU00111"/>
    </source>
</evidence>
<evidence type="ECO:0000269" key="2">
    <source>
    </source>
</evidence>
<evidence type="ECO:0000305" key="3"/>
<evidence type="ECO:0000305" key="4">
    <source>
    </source>
</evidence>